<comment type="function">
    <text evidence="1">Formation of pseudouridine at positions 38, 39 and 40 in the anticodon stem and loop of transfer RNAs.</text>
</comment>
<comment type="catalytic activity">
    <reaction evidence="1">
        <text>uridine(38/39/40) in tRNA = pseudouridine(38/39/40) in tRNA</text>
        <dbReference type="Rhea" id="RHEA:22376"/>
        <dbReference type="Rhea" id="RHEA-COMP:10085"/>
        <dbReference type="Rhea" id="RHEA-COMP:10087"/>
        <dbReference type="ChEBI" id="CHEBI:65314"/>
        <dbReference type="ChEBI" id="CHEBI:65315"/>
        <dbReference type="EC" id="5.4.99.12"/>
    </reaction>
</comment>
<comment type="subunit">
    <text evidence="1">Homodimer.</text>
</comment>
<comment type="similarity">
    <text evidence="1">Belongs to the tRNA pseudouridine synthase TruA family.</text>
</comment>
<keyword id="KW-0413">Isomerase</keyword>
<keyword id="KW-0819">tRNA processing</keyword>
<sequence length="267" mass="31280">MRILVEIAYQGNNFLGFQIQQNGRTVQQQFEKLLQRMHKRHVRIHPSSRTDRGVHAIQQYFHFDTELNIPMSQWQYAMNRTLPDDIYVNNVVTVDDDFHCRYDCVGKRYRYKVYQAQHRDPFQSGLKTFIPETLDLGKMNRAAQQFIGTHDFTGFCSQKTEVESKVRTLYQSEIVKTDDGFDYIVTGSGFLYNMVRVLVAFLIEVGKGRHEVSDVPKLLESKNRKNVPFTAPAEGLYLEKIYLDENELLKDFGNDIKIHRKKSLQND</sequence>
<evidence type="ECO:0000255" key="1">
    <source>
        <dbReference type="HAMAP-Rule" id="MF_00171"/>
    </source>
</evidence>
<dbReference type="EC" id="5.4.99.12" evidence="1"/>
<dbReference type="EMBL" id="AP009351">
    <property type="protein sequence ID" value="BAF68393.1"/>
    <property type="molecule type" value="Genomic_DNA"/>
</dbReference>
<dbReference type="RefSeq" id="WP_001221860.1">
    <property type="nucleotide sequence ID" value="NZ_JBBIAE010000006.1"/>
</dbReference>
<dbReference type="SMR" id="A6QJ61"/>
<dbReference type="KEGG" id="sae:NWMN_2121"/>
<dbReference type="HOGENOM" id="CLU_014673_0_1_9"/>
<dbReference type="Proteomes" id="UP000006386">
    <property type="component" value="Chromosome"/>
</dbReference>
<dbReference type="GO" id="GO:0003723">
    <property type="term" value="F:RNA binding"/>
    <property type="evidence" value="ECO:0007669"/>
    <property type="project" value="InterPro"/>
</dbReference>
<dbReference type="GO" id="GO:0160147">
    <property type="term" value="F:tRNA pseudouridine(38-40) synthase activity"/>
    <property type="evidence" value="ECO:0007669"/>
    <property type="project" value="UniProtKB-EC"/>
</dbReference>
<dbReference type="GO" id="GO:0031119">
    <property type="term" value="P:tRNA pseudouridine synthesis"/>
    <property type="evidence" value="ECO:0007669"/>
    <property type="project" value="UniProtKB-UniRule"/>
</dbReference>
<dbReference type="CDD" id="cd02570">
    <property type="entry name" value="PseudoU_synth_EcTruA"/>
    <property type="match status" value="1"/>
</dbReference>
<dbReference type="FunFam" id="3.30.70.580:FF:000001">
    <property type="entry name" value="tRNA pseudouridine synthase A"/>
    <property type="match status" value="1"/>
</dbReference>
<dbReference type="Gene3D" id="3.30.70.660">
    <property type="entry name" value="Pseudouridine synthase I, catalytic domain, C-terminal subdomain"/>
    <property type="match status" value="1"/>
</dbReference>
<dbReference type="Gene3D" id="3.30.70.580">
    <property type="entry name" value="Pseudouridine synthase I, catalytic domain, N-terminal subdomain"/>
    <property type="match status" value="1"/>
</dbReference>
<dbReference type="HAMAP" id="MF_00171">
    <property type="entry name" value="TruA"/>
    <property type="match status" value="1"/>
</dbReference>
<dbReference type="InterPro" id="IPR020103">
    <property type="entry name" value="PsdUridine_synth_cat_dom_sf"/>
</dbReference>
<dbReference type="InterPro" id="IPR001406">
    <property type="entry name" value="PsdUridine_synth_TruA"/>
</dbReference>
<dbReference type="InterPro" id="IPR020097">
    <property type="entry name" value="PsdUridine_synth_TruA_a/b_dom"/>
</dbReference>
<dbReference type="InterPro" id="IPR020095">
    <property type="entry name" value="PsdUridine_synth_TruA_C"/>
</dbReference>
<dbReference type="InterPro" id="IPR020094">
    <property type="entry name" value="TruA/RsuA/RluB/E/F_N"/>
</dbReference>
<dbReference type="NCBIfam" id="TIGR00071">
    <property type="entry name" value="hisT_truA"/>
    <property type="match status" value="1"/>
</dbReference>
<dbReference type="PANTHER" id="PTHR11142">
    <property type="entry name" value="PSEUDOURIDYLATE SYNTHASE"/>
    <property type="match status" value="1"/>
</dbReference>
<dbReference type="PANTHER" id="PTHR11142:SF0">
    <property type="entry name" value="TRNA PSEUDOURIDINE SYNTHASE-LIKE 1"/>
    <property type="match status" value="1"/>
</dbReference>
<dbReference type="Pfam" id="PF01416">
    <property type="entry name" value="PseudoU_synth_1"/>
    <property type="match status" value="2"/>
</dbReference>
<dbReference type="PIRSF" id="PIRSF001430">
    <property type="entry name" value="tRNA_psdUrid_synth"/>
    <property type="match status" value="1"/>
</dbReference>
<dbReference type="SUPFAM" id="SSF55120">
    <property type="entry name" value="Pseudouridine synthase"/>
    <property type="match status" value="1"/>
</dbReference>
<protein>
    <recommendedName>
        <fullName evidence="1">tRNA pseudouridine synthase A</fullName>
        <ecNumber evidence="1">5.4.99.12</ecNumber>
    </recommendedName>
    <alternativeName>
        <fullName evidence="1">tRNA pseudouridine(38-40) synthase</fullName>
    </alternativeName>
    <alternativeName>
        <fullName evidence="1">tRNA pseudouridylate synthase I</fullName>
    </alternativeName>
    <alternativeName>
        <fullName evidence="1">tRNA-uridine isomerase I</fullName>
    </alternativeName>
</protein>
<proteinExistence type="inferred from homology"/>
<reference key="1">
    <citation type="journal article" date="2008" name="J. Bacteriol.">
        <title>Genome sequence of Staphylococcus aureus strain Newman and comparative analysis of staphylococcal genomes: polymorphism and evolution of two major pathogenicity islands.</title>
        <authorList>
            <person name="Baba T."/>
            <person name="Bae T."/>
            <person name="Schneewind O."/>
            <person name="Takeuchi F."/>
            <person name="Hiramatsu K."/>
        </authorList>
    </citation>
    <scope>NUCLEOTIDE SEQUENCE [LARGE SCALE GENOMIC DNA]</scope>
    <source>
        <strain>Newman</strain>
    </source>
</reference>
<name>TRUA_STAAE</name>
<organism>
    <name type="scientific">Staphylococcus aureus (strain Newman)</name>
    <dbReference type="NCBI Taxonomy" id="426430"/>
    <lineage>
        <taxon>Bacteria</taxon>
        <taxon>Bacillati</taxon>
        <taxon>Bacillota</taxon>
        <taxon>Bacilli</taxon>
        <taxon>Bacillales</taxon>
        <taxon>Staphylococcaceae</taxon>
        <taxon>Staphylococcus</taxon>
    </lineage>
</organism>
<gene>
    <name evidence="1" type="primary">truA</name>
    <name type="ordered locus">NWMN_2121</name>
</gene>
<accession>A6QJ61</accession>
<feature type="chain" id="PRO_1000071598" description="tRNA pseudouridine synthase A">
    <location>
        <begin position="1"/>
        <end position="267"/>
    </location>
</feature>
<feature type="active site" description="Nucleophile" evidence="1">
    <location>
        <position position="51"/>
    </location>
</feature>
<feature type="binding site" evidence="1">
    <location>
        <position position="109"/>
    </location>
    <ligand>
        <name>substrate</name>
    </ligand>
</feature>